<reference key="1">
    <citation type="journal article" date="2008" name="J. Bacteriol.">
        <title>Genome of the actinomycete plant pathogen Clavibacter michiganensis subsp. sepedonicus suggests recent niche adaptation.</title>
        <authorList>
            <person name="Bentley S.D."/>
            <person name="Corton C."/>
            <person name="Brown S.E."/>
            <person name="Barron A."/>
            <person name="Clark L."/>
            <person name="Doggett J."/>
            <person name="Harris B."/>
            <person name="Ormond D."/>
            <person name="Quail M.A."/>
            <person name="May G."/>
            <person name="Francis D."/>
            <person name="Knudson D."/>
            <person name="Parkhill J."/>
            <person name="Ishimaru C.A."/>
        </authorList>
    </citation>
    <scope>NUCLEOTIDE SEQUENCE [LARGE SCALE GENOMIC DNA]</scope>
    <source>
        <strain>ATCC 33113 / DSM 20744 / JCM 9667 / LMG 2889 / ICMP 2535 / C-1</strain>
    </source>
</reference>
<accession>B0RHB3</accession>
<sequence length="226" mass="24340">MTDERAAGGGATRRRKSLSEKQISILEFIQRTIAGQGYPPSMREIGDAVGLASLSSVTHQLNQLELSGYLRRDPNRPRALEVLIDLPGTGTAESGEPSTPVGDAAMVPMVGRIAAGIPITAEQMVEEVFPLPRQLVGKGDLFMLRVVGDSMIDAAICDGDWVVVRQQKTAENGDIVAAMLDDEATVKVFRQRDGHTWLLARNSAFEPILGDFAEVVGKVVAVMRSV</sequence>
<gene>
    <name evidence="1" type="primary">lexA</name>
    <name type="ordered locus">CMS1215</name>
</gene>
<dbReference type="EC" id="3.4.21.88" evidence="1"/>
<dbReference type="EMBL" id="AM849034">
    <property type="protein sequence ID" value="CAQ01330.1"/>
    <property type="molecule type" value="Genomic_DNA"/>
</dbReference>
<dbReference type="RefSeq" id="WP_012298608.1">
    <property type="nucleotide sequence ID" value="NZ_MZMN01000003.1"/>
</dbReference>
<dbReference type="SMR" id="B0RHB3"/>
<dbReference type="STRING" id="31964.CMS1215"/>
<dbReference type="MEROPS" id="S24.001"/>
<dbReference type="KEGG" id="cms:CMS1215"/>
<dbReference type="eggNOG" id="COG1974">
    <property type="taxonomic scope" value="Bacteria"/>
</dbReference>
<dbReference type="HOGENOM" id="CLU_066192_45_0_11"/>
<dbReference type="OrthoDB" id="9802364at2"/>
<dbReference type="Proteomes" id="UP000001318">
    <property type="component" value="Chromosome"/>
</dbReference>
<dbReference type="GO" id="GO:0003677">
    <property type="term" value="F:DNA binding"/>
    <property type="evidence" value="ECO:0007669"/>
    <property type="project" value="UniProtKB-UniRule"/>
</dbReference>
<dbReference type="GO" id="GO:0004252">
    <property type="term" value="F:serine-type endopeptidase activity"/>
    <property type="evidence" value="ECO:0007669"/>
    <property type="project" value="UniProtKB-UniRule"/>
</dbReference>
<dbReference type="GO" id="GO:0006281">
    <property type="term" value="P:DNA repair"/>
    <property type="evidence" value="ECO:0007669"/>
    <property type="project" value="UniProtKB-UniRule"/>
</dbReference>
<dbReference type="GO" id="GO:0006260">
    <property type="term" value="P:DNA replication"/>
    <property type="evidence" value="ECO:0007669"/>
    <property type="project" value="UniProtKB-UniRule"/>
</dbReference>
<dbReference type="GO" id="GO:0045892">
    <property type="term" value="P:negative regulation of DNA-templated transcription"/>
    <property type="evidence" value="ECO:0007669"/>
    <property type="project" value="UniProtKB-UniRule"/>
</dbReference>
<dbReference type="GO" id="GO:0006508">
    <property type="term" value="P:proteolysis"/>
    <property type="evidence" value="ECO:0007669"/>
    <property type="project" value="InterPro"/>
</dbReference>
<dbReference type="GO" id="GO:0009432">
    <property type="term" value="P:SOS response"/>
    <property type="evidence" value="ECO:0007669"/>
    <property type="project" value="UniProtKB-UniRule"/>
</dbReference>
<dbReference type="CDD" id="cd06529">
    <property type="entry name" value="S24_LexA-like"/>
    <property type="match status" value="1"/>
</dbReference>
<dbReference type="FunFam" id="2.10.109.10:FF:000001">
    <property type="entry name" value="LexA repressor"/>
    <property type="match status" value="1"/>
</dbReference>
<dbReference type="Gene3D" id="2.10.109.10">
    <property type="entry name" value="Umud Fragment, subunit A"/>
    <property type="match status" value="1"/>
</dbReference>
<dbReference type="Gene3D" id="1.10.10.10">
    <property type="entry name" value="Winged helix-like DNA-binding domain superfamily/Winged helix DNA-binding domain"/>
    <property type="match status" value="1"/>
</dbReference>
<dbReference type="HAMAP" id="MF_00015">
    <property type="entry name" value="LexA"/>
    <property type="match status" value="1"/>
</dbReference>
<dbReference type="InterPro" id="IPR006200">
    <property type="entry name" value="LexA"/>
</dbReference>
<dbReference type="InterPro" id="IPR039418">
    <property type="entry name" value="LexA-like"/>
</dbReference>
<dbReference type="InterPro" id="IPR036286">
    <property type="entry name" value="LexA/Signal_pep-like_sf"/>
</dbReference>
<dbReference type="InterPro" id="IPR006199">
    <property type="entry name" value="LexA_DNA-bd_dom"/>
</dbReference>
<dbReference type="InterPro" id="IPR050077">
    <property type="entry name" value="LexA_repressor"/>
</dbReference>
<dbReference type="InterPro" id="IPR006197">
    <property type="entry name" value="Peptidase_S24_LexA"/>
</dbReference>
<dbReference type="InterPro" id="IPR015927">
    <property type="entry name" value="Peptidase_S24_S26A/B/C"/>
</dbReference>
<dbReference type="InterPro" id="IPR036388">
    <property type="entry name" value="WH-like_DNA-bd_sf"/>
</dbReference>
<dbReference type="InterPro" id="IPR036390">
    <property type="entry name" value="WH_DNA-bd_sf"/>
</dbReference>
<dbReference type="NCBIfam" id="TIGR00498">
    <property type="entry name" value="lexA"/>
    <property type="match status" value="1"/>
</dbReference>
<dbReference type="PANTHER" id="PTHR33516">
    <property type="entry name" value="LEXA REPRESSOR"/>
    <property type="match status" value="1"/>
</dbReference>
<dbReference type="PANTHER" id="PTHR33516:SF2">
    <property type="entry name" value="LEXA REPRESSOR-RELATED"/>
    <property type="match status" value="1"/>
</dbReference>
<dbReference type="Pfam" id="PF01726">
    <property type="entry name" value="LexA_DNA_bind"/>
    <property type="match status" value="1"/>
</dbReference>
<dbReference type="Pfam" id="PF00717">
    <property type="entry name" value="Peptidase_S24"/>
    <property type="match status" value="1"/>
</dbReference>
<dbReference type="PRINTS" id="PR00726">
    <property type="entry name" value="LEXASERPTASE"/>
</dbReference>
<dbReference type="SUPFAM" id="SSF51306">
    <property type="entry name" value="LexA/Signal peptidase"/>
    <property type="match status" value="1"/>
</dbReference>
<dbReference type="SUPFAM" id="SSF46785">
    <property type="entry name" value="Winged helix' DNA-binding domain"/>
    <property type="match status" value="1"/>
</dbReference>
<organism>
    <name type="scientific">Clavibacter sepedonicus</name>
    <name type="common">Clavibacter michiganensis subsp. sepedonicus</name>
    <dbReference type="NCBI Taxonomy" id="31964"/>
    <lineage>
        <taxon>Bacteria</taxon>
        <taxon>Bacillati</taxon>
        <taxon>Actinomycetota</taxon>
        <taxon>Actinomycetes</taxon>
        <taxon>Micrococcales</taxon>
        <taxon>Microbacteriaceae</taxon>
        <taxon>Clavibacter</taxon>
    </lineage>
</organism>
<comment type="function">
    <text evidence="1">Represses a number of genes involved in the response to DNA damage (SOS response), including recA and lexA. In the presence of single-stranded DNA, RecA interacts with LexA causing an autocatalytic cleavage which disrupts the DNA-binding part of LexA, leading to derepression of the SOS regulon and eventually DNA repair.</text>
</comment>
<comment type="catalytic activity">
    <reaction evidence="1">
        <text>Hydrolysis of Ala-|-Gly bond in repressor LexA.</text>
        <dbReference type="EC" id="3.4.21.88"/>
    </reaction>
</comment>
<comment type="subunit">
    <text evidence="1">Homodimer.</text>
</comment>
<comment type="similarity">
    <text evidence="1">Belongs to the peptidase S24 family.</text>
</comment>
<keyword id="KW-0068">Autocatalytic cleavage</keyword>
<keyword id="KW-0227">DNA damage</keyword>
<keyword id="KW-0234">DNA repair</keyword>
<keyword id="KW-0235">DNA replication</keyword>
<keyword id="KW-0238">DNA-binding</keyword>
<keyword id="KW-0378">Hydrolase</keyword>
<keyword id="KW-0678">Repressor</keyword>
<keyword id="KW-0742">SOS response</keyword>
<keyword id="KW-0804">Transcription</keyword>
<keyword id="KW-0805">Transcription regulation</keyword>
<protein>
    <recommendedName>
        <fullName evidence="1">LexA repressor</fullName>
        <ecNumber evidence="1">3.4.21.88</ecNumber>
    </recommendedName>
</protein>
<proteinExistence type="inferred from homology"/>
<evidence type="ECO:0000255" key="1">
    <source>
        <dbReference type="HAMAP-Rule" id="MF_00015"/>
    </source>
</evidence>
<name>LEXA_CLASE</name>
<feature type="chain" id="PRO_1000074051" description="LexA repressor">
    <location>
        <begin position="1"/>
        <end position="226"/>
    </location>
</feature>
<feature type="DNA-binding region" description="H-T-H motif" evidence="1">
    <location>
        <begin position="42"/>
        <end position="62"/>
    </location>
</feature>
<feature type="active site" description="For autocatalytic cleavage activity" evidence="1">
    <location>
        <position position="150"/>
    </location>
</feature>
<feature type="active site" description="For autocatalytic cleavage activity" evidence="1">
    <location>
        <position position="187"/>
    </location>
</feature>
<feature type="site" description="Cleavage; by autolysis" evidence="1">
    <location>
        <begin position="115"/>
        <end position="116"/>
    </location>
</feature>